<gene>
    <name type="primary">LCR38</name>
    <name type="ordered locus">At4g19905</name>
    <name type="ORF">F18F4</name>
</gene>
<dbReference type="EMBL" id="AL021637">
    <property type="status" value="NOT_ANNOTATED_CDS"/>
    <property type="molecule type" value="Genomic_DNA"/>
</dbReference>
<dbReference type="EMBL" id="AL161551">
    <property type="status" value="NOT_ANNOTATED_CDS"/>
    <property type="molecule type" value="Genomic_DNA"/>
</dbReference>
<dbReference type="EMBL" id="CP002687">
    <property type="protein sequence ID" value="AEE84244.1"/>
    <property type="molecule type" value="Genomic_DNA"/>
</dbReference>
<dbReference type="PIR" id="T04875">
    <property type="entry name" value="T04875"/>
</dbReference>
<dbReference type="RefSeq" id="NP_001031673.1">
    <property type="nucleotide sequence ID" value="NM_001036596.2"/>
</dbReference>
<dbReference type="SMR" id="P82753"/>
<dbReference type="PaxDb" id="3702-AT4G19905.1"/>
<dbReference type="ProteomicsDB" id="224201"/>
<dbReference type="EnsemblPlants" id="AT4G19905.1">
    <property type="protein sequence ID" value="AT4G19905.1"/>
    <property type="gene ID" value="AT4G19905"/>
</dbReference>
<dbReference type="GeneID" id="3770536"/>
<dbReference type="Gramene" id="AT4G19905.1">
    <property type="protein sequence ID" value="AT4G19905.1"/>
    <property type="gene ID" value="AT4G19905"/>
</dbReference>
<dbReference type="KEGG" id="ath:AT4G19905"/>
<dbReference type="Araport" id="AT4G19905"/>
<dbReference type="TAIR" id="AT4G19905">
    <property type="gene designation" value="LCR38"/>
</dbReference>
<dbReference type="HOGENOM" id="CLU_182511_1_1_1"/>
<dbReference type="InParanoid" id="P82753"/>
<dbReference type="OMA" id="CTCEYNC"/>
<dbReference type="OrthoDB" id="1022222at2759"/>
<dbReference type="PhylomeDB" id="P82753"/>
<dbReference type="PRO" id="PR:P82753"/>
<dbReference type="Proteomes" id="UP000006548">
    <property type="component" value="Chromosome 4"/>
</dbReference>
<dbReference type="ExpressionAtlas" id="P82753">
    <property type="expression patterns" value="baseline"/>
</dbReference>
<dbReference type="GO" id="GO:0005576">
    <property type="term" value="C:extracellular region"/>
    <property type="evidence" value="ECO:0007669"/>
    <property type="project" value="UniProtKB-SubCell"/>
</dbReference>
<dbReference type="GO" id="GO:0050832">
    <property type="term" value="P:defense response to fungus"/>
    <property type="evidence" value="ECO:0007669"/>
    <property type="project" value="UniProtKB-KW"/>
</dbReference>
<dbReference type="GO" id="GO:0031640">
    <property type="term" value="P:killing of cells of another organism"/>
    <property type="evidence" value="ECO:0007669"/>
    <property type="project" value="UniProtKB-KW"/>
</dbReference>
<dbReference type="InterPro" id="IPR010851">
    <property type="entry name" value="DEFL"/>
</dbReference>
<dbReference type="PANTHER" id="PTHR33830:SF11">
    <property type="entry name" value="DEFENSIN-LIKE PROTEIN 163-RELATED"/>
    <property type="match status" value="1"/>
</dbReference>
<dbReference type="PANTHER" id="PTHR33830">
    <property type="entry name" value="DEFENSIN-LIKE PROTEIN 184-RELATED"/>
    <property type="match status" value="1"/>
</dbReference>
<dbReference type="Pfam" id="PF07333">
    <property type="entry name" value="SLR1-BP"/>
    <property type="match status" value="1"/>
</dbReference>
<comment type="subcellular location">
    <subcellularLocation>
        <location evidence="1">Secreted</location>
    </subcellularLocation>
</comment>
<comment type="similarity">
    <text evidence="3">Belongs to the DEFL family.</text>
</comment>
<reference evidence="3" key="1">
    <citation type="journal article" date="1999" name="Nature">
        <title>Sequence and analysis of chromosome 4 of the plant Arabidopsis thaliana.</title>
        <authorList>
            <person name="Mayer K.F.X."/>
            <person name="Schueller C."/>
            <person name="Wambutt R."/>
            <person name="Murphy G."/>
            <person name="Volckaert G."/>
            <person name="Pohl T."/>
            <person name="Duesterhoeft A."/>
            <person name="Stiekema W."/>
            <person name="Entian K.-D."/>
            <person name="Terryn N."/>
            <person name="Harris B."/>
            <person name="Ansorge W."/>
            <person name="Brandt P."/>
            <person name="Grivell L.A."/>
            <person name="Rieger M."/>
            <person name="Weichselgartner M."/>
            <person name="de Simone V."/>
            <person name="Obermaier B."/>
            <person name="Mache R."/>
            <person name="Mueller M."/>
            <person name="Kreis M."/>
            <person name="Delseny M."/>
            <person name="Puigdomenech P."/>
            <person name="Watson M."/>
            <person name="Schmidtheini T."/>
            <person name="Reichert B."/>
            <person name="Portetelle D."/>
            <person name="Perez-Alonso M."/>
            <person name="Boutry M."/>
            <person name="Bancroft I."/>
            <person name="Vos P."/>
            <person name="Hoheisel J."/>
            <person name="Zimmermann W."/>
            <person name="Wedler H."/>
            <person name="Ridley P."/>
            <person name="Langham S.-A."/>
            <person name="McCullagh B."/>
            <person name="Bilham L."/>
            <person name="Robben J."/>
            <person name="van der Schueren J."/>
            <person name="Grymonprez B."/>
            <person name="Chuang Y.-J."/>
            <person name="Vandenbussche F."/>
            <person name="Braeken M."/>
            <person name="Weltjens I."/>
            <person name="Voet M."/>
            <person name="Bastiaens I."/>
            <person name="Aert R."/>
            <person name="Defoor E."/>
            <person name="Weitzenegger T."/>
            <person name="Bothe G."/>
            <person name="Ramsperger U."/>
            <person name="Hilbert H."/>
            <person name="Braun M."/>
            <person name="Holzer E."/>
            <person name="Brandt A."/>
            <person name="Peters S."/>
            <person name="van Staveren M."/>
            <person name="Dirkse W."/>
            <person name="Mooijman P."/>
            <person name="Klein Lankhorst R."/>
            <person name="Rose M."/>
            <person name="Hauf J."/>
            <person name="Koetter P."/>
            <person name="Berneiser S."/>
            <person name="Hempel S."/>
            <person name="Feldpausch M."/>
            <person name="Lamberth S."/>
            <person name="Van den Daele H."/>
            <person name="De Keyser A."/>
            <person name="Buysshaert C."/>
            <person name="Gielen J."/>
            <person name="Villarroel R."/>
            <person name="De Clercq R."/>
            <person name="van Montagu M."/>
            <person name="Rogers J."/>
            <person name="Cronin A."/>
            <person name="Quail M.A."/>
            <person name="Bray-Allen S."/>
            <person name="Clark L."/>
            <person name="Doggett J."/>
            <person name="Hall S."/>
            <person name="Kay M."/>
            <person name="Lennard N."/>
            <person name="McLay K."/>
            <person name="Mayes R."/>
            <person name="Pettett A."/>
            <person name="Rajandream M.A."/>
            <person name="Lyne M."/>
            <person name="Benes V."/>
            <person name="Rechmann S."/>
            <person name="Borkova D."/>
            <person name="Bloecker H."/>
            <person name="Scharfe M."/>
            <person name="Grimm M."/>
            <person name="Loehnert T.-H."/>
            <person name="Dose S."/>
            <person name="de Haan M."/>
            <person name="Maarse A.C."/>
            <person name="Schaefer M."/>
            <person name="Mueller-Auer S."/>
            <person name="Gabel C."/>
            <person name="Fuchs M."/>
            <person name="Fartmann B."/>
            <person name="Granderath K."/>
            <person name="Dauner D."/>
            <person name="Herzl A."/>
            <person name="Neumann S."/>
            <person name="Argiriou A."/>
            <person name="Vitale D."/>
            <person name="Liguori R."/>
            <person name="Piravandi E."/>
            <person name="Massenet O."/>
            <person name="Quigley F."/>
            <person name="Clabauld G."/>
            <person name="Muendlein A."/>
            <person name="Felber R."/>
            <person name="Schnabl S."/>
            <person name="Hiller R."/>
            <person name="Schmidt W."/>
            <person name="Lecharny A."/>
            <person name="Aubourg S."/>
            <person name="Chefdor F."/>
            <person name="Cooke R."/>
            <person name="Berger C."/>
            <person name="Monfort A."/>
            <person name="Casacuberta E."/>
            <person name="Gibbons T."/>
            <person name="Weber N."/>
            <person name="Vandenbol M."/>
            <person name="Bargues M."/>
            <person name="Terol J."/>
            <person name="Torres A."/>
            <person name="Perez-Perez A."/>
            <person name="Purnelle B."/>
            <person name="Bent E."/>
            <person name="Johnson S."/>
            <person name="Tacon D."/>
            <person name="Jesse T."/>
            <person name="Heijnen L."/>
            <person name="Schwarz S."/>
            <person name="Scholler P."/>
            <person name="Heber S."/>
            <person name="Francs P."/>
            <person name="Bielke C."/>
            <person name="Frishman D."/>
            <person name="Haase D."/>
            <person name="Lemcke K."/>
            <person name="Mewes H.-W."/>
            <person name="Stocker S."/>
            <person name="Zaccaria P."/>
            <person name="Bevan M."/>
            <person name="Wilson R.K."/>
            <person name="de la Bastide M."/>
            <person name="Habermann K."/>
            <person name="Parnell L."/>
            <person name="Dedhia N."/>
            <person name="Gnoj L."/>
            <person name="Schutz K."/>
            <person name="Huang E."/>
            <person name="Spiegel L."/>
            <person name="Sekhon M."/>
            <person name="Murray J."/>
            <person name="Sheet P."/>
            <person name="Cordes M."/>
            <person name="Abu-Threideh J."/>
            <person name="Stoneking T."/>
            <person name="Kalicki J."/>
            <person name="Graves T."/>
            <person name="Harmon G."/>
            <person name="Edwards J."/>
            <person name="Latreille P."/>
            <person name="Courtney L."/>
            <person name="Cloud J."/>
            <person name="Abbott A."/>
            <person name="Scott K."/>
            <person name="Johnson D."/>
            <person name="Minx P."/>
            <person name="Bentley D."/>
            <person name="Fulton B."/>
            <person name="Miller N."/>
            <person name="Greco T."/>
            <person name="Kemp K."/>
            <person name="Kramer J."/>
            <person name="Fulton L."/>
            <person name="Mardis E."/>
            <person name="Dante M."/>
            <person name="Pepin K."/>
            <person name="Hillier L.W."/>
            <person name="Nelson J."/>
            <person name="Spieth J."/>
            <person name="Ryan E."/>
            <person name="Andrews S."/>
            <person name="Geisel C."/>
            <person name="Layman D."/>
            <person name="Du H."/>
            <person name="Ali J."/>
            <person name="Berghoff A."/>
            <person name="Jones K."/>
            <person name="Drone K."/>
            <person name="Cotton M."/>
            <person name="Joshu C."/>
            <person name="Antonoiu B."/>
            <person name="Zidanic M."/>
            <person name="Strong C."/>
            <person name="Sun H."/>
            <person name="Lamar B."/>
            <person name="Yordan C."/>
            <person name="Ma P."/>
            <person name="Zhong J."/>
            <person name="Preston R."/>
            <person name="Vil D."/>
            <person name="Shekher M."/>
            <person name="Matero A."/>
            <person name="Shah R."/>
            <person name="Swaby I.K."/>
            <person name="O'Shaughnessy A."/>
            <person name="Rodriguez M."/>
            <person name="Hoffman J."/>
            <person name="Till S."/>
            <person name="Granat S."/>
            <person name="Shohdy N."/>
            <person name="Hasegawa A."/>
            <person name="Hameed A."/>
            <person name="Lodhi M."/>
            <person name="Johnson A."/>
            <person name="Chen E."/>
            <person name="Marra M.A."/>
            <person name="Martienssen R."/>
            <person name="McCombie W.R."/>
        </authorList>
    </citation>
    <scope>NUCLEOTIDE SEQUENCE [LARGE SCALE GENOMIC DNA]</scope>
    <source>
        <strain>cv. Columbia</strain>
    </source>
</reference>
<reference key="2">
    <citation type="journal article" date="2017" name="Plant J.">
        <title>Araport11: a complete reannotation of the Arabidopsis thaliana reference genome.</title>
        <authorList>
            <person name="Cheng C.Y."/>
            <person name="Krishnakumar V."/>
            <person name="Chan A.P."/>
            <person name="Thibaud-Nissen F."/>
            <person name="Schobel S."/>
            <person name="Town C.D."/>
        </authorList>
    </citation>
    <scope>GENOME REANNOTATION</scope>
    <source>
        <strain>cv. Columbia</strain>
    </source>
</reference>
<reference evidence="3" key="3">
    <citation type="journal article" date="2001" name="Plant Mol. Biol.">
        <title>Two large Arabidopsis thaliana gene families are homologous to the Brassica gene superfamily that encodes pollen coat proteins and the male component of the self-incompatibility response.</title>
        <authorList>
            <person name="Vanoosthuyse V."/>
            <person name="Miege C."/>
            <person name="Dumas C."/>
            <person name="Cock J.M."/>
        </authorList>
    </citation>
    <scope>IDENTIFICATION</scope>
</reference>
<reference key="4">
    <citation type="journal article" date="2005" name="Plant Physiol.">
        <title>Genome organization of more than 300 defensin-like genes in Arabidopsis.</title>
        <authorList>
            <person name="Silverstein K.A.T."/>
            <person name="Graham M.A."/>
            <person name="Paape T.D."/>
            <person name="VandenBosch K.A."/>
        </authorList>
    </citation>
    <scope>GENE FAMILY</scope>
</reference>
<protein>
    <recommendedName>
        <fullName>Defensin-like protein 164</fullName>
    </recommendedName>
    <alternativeName>
        <fullName>Low-molecular-weight cysteine-rich protein 38</fullName>
        <shortName>Protein LCR38</shortName>
    </alternativeName>
</protein>
<accession>P82753</accession>
<proteinExistence type="evidence at transcript level"/>
<sequence length="76" mass="8562">MAKLLCSYLFICMFVLSGFLVFSSAKQLKTCTSVIKLGHPCDIESCLNECFRVYNTGFATCRGDKYSQLCTCEYNC</sequence>
<feature type="signal peptide" evidence="2">
    <location>
        <begin position="1"/>
        <end position="25"/>
    </location>
</feature>
<feature type="chain" id="PRO_0000017277" description="Defensin-like protein 164">
    <location>
        <begin position="26"/>
        <end position="76"/>
    </location>
</feature>
<feature type="disulfide bond" evidence="1">
    <location>
        <begin position="31"/>
        <end position="76"/>
    </location>
</feature>
<feature type="disulfide bond" evidence="1">
    <location>
        <begin position="41"/>
        <end position="61"/>
    </location>
</feature>
<feature type="disulfide bond" evidence="1">
    <location>
        <begin position="46"/>
        <end position="70"/>
    </location>
</feature>
<feature type="disulfide bond" evidence="1">
    <location>
        <begin position="50"/>
        <end position="72"/>
    </location>
</feature>
<organism evidence="3">
    <name type="scientific">Arabidopsis thaliana</name>
    <name type="common">Mouse-ear cress</name>
    <dbReference type="NCBI Taxonomy" id="3702"/>
    <lineage>
        <taxon>Eukaryota</taxon>
        <taxon>Viridiplantae</taxon>
        <taxon>Streptophyta</taxon>
        <taxon>Embryophyta</taxon>
        <taxon>Tracheophyta</taxon>
        <taxon>Spermatophyta</taxon>
        <taxon>Magnoliopsida</taxon>
        <taxon>eudicotyledons</taxon>
        <taxon>Gunneridae</taxon>
        <taxon>Pentapetalae</taxon>
        <taxon>rosids</taxon>
        <taxon>malvids</taxon>
        <taxon>Brassicales</taxon>
        <taxon>Brassicaceae</taxon>
        <taxon>Camelineae</taxon>
        <taxon>Arabidopsis</taxon>
    </lineage>
</organism>
<name>DF164_ARATH</name>
<keyword id="KW-0929">Antimicrobial</keyword>
<keyword id="KW-1015">Disulfide bond</keyword>
<keyword id="KW-0295">Fungicide</keyword>
<keyword id="KW-0611">Plant defense</keyword>
<keyword id="KW-1185">Reference proteome</keyword>
<keyword id="KW-0964">Secreted</keyword>
<keyword id="KW-0732">Signal</keyword>
<evidence type="ECO:0000250" key="1"/>
<evidence type="ECO:0000255" key="2"/>
<evidence type="ECO:0000305" key="3"/>